<organism>
    <name type="scientific">Treponema pallidum (strain Nichols)</name>
    <dbReference type="NCBI Taxonomy" id="243276"/>
    <lineage>
        <taxon>Bacteria</taxon>
        <taxon>Pseudomonadati</taxon>
        <taxon>Spirochaetota</taxon>
        <taxon>Spirochaetia</taxon>
        <taxon>Spirochaetales</taxon>
        <taxon>Treponemataceae</taxon>
        <taxon>Treponema</taxon>
    </lineage>
</organism>
<comment type="function">
    <text evidence="1">Involved in cell wall formation. Catalyzes the final step in the synthesis of UDP-N-acetylmuramoyl-pentapeptide, the precursor of murein.</text>
</comment>
<comment type="catalytic activity">
    <reaction evidence="1">
        <text>D-alanyl-D-alanine + UDP-N-acetyl-alpha-D-muramoyl-L-alanyl-gamma-D-glutamyl-meso-2,6-diaminopimelate + ATP = UDP-N-acetyl-alpha-D-muramoyl-L-alanyl-gamma-D-glutamyl-meso-2,6-diaminopimeloyl-D-alanyl-D-alanine + ADP + phosphate + H(+)</text>
        <dbReference type="Rhea" id="RHEA:28374"/>
        <dbReference type="ChEBI" id="CHEBI:15378"/>
        <dbReference type="ChEBI" id="CHEBI:30616"/>
        <dbReference type="ChEBI" id="CHEBI:43474"/>
        <dbReference type="ChEBI" id="CHEBI:57822"/>
        <dbReference type="ChEBI" id="CHEBI:61386"/>
        <dbReference type="ChEBI" id="CHEBI:83905"/>
        <dbReference type="ChEBI" id="CHEBI:456216"/>
        <dbReference type="EC" id="6.3.2.10"/>
    </reaction>
</comment>
<comment type="pathway">
    <text evidence="1">Cell wall biogenesis; peptidoglycan biosynthesis.</text>
</comment>
<comment type="subcellular location">
    <subcellularLocation>
        <location evidence="1">Cytoplasm</location>
    </subcellularLocation>
</comment>
<comment type="similarity">
    <text evidence="1">Belongs to the MurCDEF family. MurF subfamily.</text>
</comment>
<proteinExistence type="inferred from homology"/>
<sequence>MLLSFDEVCAAVQGARVCDARGARGFDGVSFDSRAVVPRDLFIPLRGAHVDGHTFVEEALQKGAVATLIDQRYPHAGEYVAWCTRFGAACIAVHDTLRALQDLASFYCKKFPALIRIGITGSSGKTTVKEMARAVFSERYRVVATPGNLNSEIGLPQSLFFVRAEHEVGIFELGMNRRGEMRTLAQILVPHYAIITNVGCAHVGILGTQQAIAEEKKEIFSQFTEHSVGFVPDDAYRVFLSNIPYGRVVVYDQGGRGLATEVIDEGLRGSRVLYQGRWIRVPLPGVHNAKNALAVIALAAQVGLPAEEIQRGMERVKPPFGRSHVVCASLTFLLDCYNANPDSMAAALHLCAHISAVSKVYVLGDMGELGVTAAEAHYRVCVLAAASDARAVYVFGPEFCRAVRKVSWGRKRVYAFALEELSALQETLDAQLRRGDFVLVKGSRSVALERLEPLLRKER</sequence>
<dbReference type="EC" id="6.3.2.10" evidence="1"/>
<dbReference type="EMBL" id="AE000520">
    <property type="protein sequence ID" value="AAC65370.1"/>
    <property type="molecule type" value="Genomic_DNA"/>
</dbReference>
<dbReference type="PIR" id="D71331">
    <property type="entry name" value="D71331"/>
</dbReference>
<dbReference type="RefSeq" id="WP_010881834.1">
    <property type="nucleotide sequence ID" value="NC_021490.2"/>
</dbReference>
<dbReference type="SMR" id="O83401"/>
<dbReference type="IntAct" id="O83401">
    <property type="interactions" value="1"/>
</dbReference>
<dbReference type="STRING" id="243276.TP_0386"/>
<dbReference type="EnsemblBacteria" id="AAC65370">
    <property type="protein sequence ID" value="AAC65370"/>
    <property type="gene ID" value="TP_0386"/>
</dbReference>
<dbReference type="KEGG" id="tpa:TP_0386"/>
<dbReference type="KEGG" id="tpw:TPANIC_0386"/>
<dbReference type="eggNOG" id="COG0770">
    <property type="taxonomic scope" value="Bacteria"/>
</dbReference>
<dbReference type="HOGENOM" id="CLU_031507_4_0_12"/>
<dbReference type="OrthoDB" id="9801978at2"/>
<dbReference type="UniPathway" id="UPA00219"/>
<dbReference type="Proteomes" id="UP000000811">
    <property type="component" value="Chromosome"/>
</dbReference>
<dbReference type="GO" id="GO:0005737">
    <property type="term" value="C:cytoplasm"/>
    <property type="evidence" value="ECO:0007669"/>
    <property type="project" value="UniProtKB-SubCell"/>
</dbReference>
<dbReference type="GO" id="GO:0005524">
    <property type="term" value="F:ATP binding"/>
    <property type="evidence" value="ECO:0007669"/>
    <property type="project" value="UniProtKB-UniRule"/>
</dbReference>
<dbReference type="GO" id="GO:0047480">
    <property type="term" value="F:UDP-N-acetylmuramoyl-tripeptide-D-alanyl-D-alanine ligase activity"/>
    <property type="evidence" value="ECO:0007669"/>
    <property type="project" value="UniProtKB-UniRule"/>
</dbReference>
<dbReference type="GO" id="GO:0008766">
    <property type="term" value="F:UDP-N-acetylmuramoylalanyl-D-glutamyl-2,6-diaminopimelate-D-alanyl-D-alanine ligase activity"/>
    <property type="evidence" value="ECO:0007669"/>
    <property type="project" value="RHEA"/>
</dbReference>
<dbReference type="GO" id="GO:0051301">
    <property type="term" value="P:cell division"/>
    <property type="evidence" value="ECO:0007669"/>
    <property type="project" value="UniProtKB-KW"/>
</dbReference>
<dbReference type="GO" id="GO:0071555">
    <property type="term" value="P:cell wall organization"/>
    <property type="evidence" value="ECO:0007669"/>
    <property type="project" value="UniProtKB-KW"/>
</dbReference>
<dbReference type="GO" id="GO:0009252">
    <property type="term" value="P:peptidoglycan biosynthetic process"/>
    <property type="evidence" value="ECO:0007669"/>
    <property type="project" value="UniProtKB-UniRule"/>
</dbReference>
<dbReference type="GO" id="GO:0008360">
    <property type="term" value="P:regulation of cell shape"/>
    <property type="evidence" value="ECO:0007669"/>
    <property type="project" value="UniProtKB-KW"/>
</dbReference>
<dbReference type="Gene3D" id="3.90.190.20">
    <property type="entry name" value="Mur ligase, C-terminal domain"/>
    <property type="match status" value="1"/>
</dbReference>
<dbReference type="Gene3D" id="3.40.1190.10">
    <property type="entry name" value="Mur-like, catalytic domain"/>
    <property type="match status" value="1"/>
</dbReference>
<dbReference type="Gene3D" id="3.40.1390.10">
    <property type="entry name" value="MurE/MurF, N-terminal domain"/>
    <property type="match status" value="1"/>
</dbReference>
<dbReference type="HAMAP" id="MF_02019">
    <property type="entry name" value="MurF"/>
    <property type="match status" value="1"/>
</dbReference>
<dbReference type="InterPro" id="IPR036565">
    <property type="entry name" value="Mur-like_cat_sf"/>
</dbReference>
<dbReference type="InterPro" id="IPR004101">
    <property type="entry name" value="Mur_ligase_C"/>
</dbReference>
<dbReference type="InterPro" id="IPR036615">
    <property type="entry name" value="Mur_ligase_C_dom_sf"/>
</dbReference>
<dbReference type="InterPro" id="IPR013221">
    <property type="entry name" value="Mur_ligase_cen"/>
</dbReference>
<dbReference type="InterPro" id="IPR000713">
    <property type="entry name" value="Mur_ligase_N"/>
</dbReference>
<dbReference type="InterPro" id="IPR051046">
    <property type="entry name" value="MurCDEF_CellWall_CoF430Synth"/>
</dbReference>
<dbReference type="InterPro" id="IPR035911">
    <property type="entry name" value="MurE/MurF_N"/>
</dbReference>
<dbReference type="InterPro" id="IPR005863">
    <property type="entry name" value="UDP-N-AcMur_synth"/>
</dbReference>
<dbReference type="NCBIfam" id="TIGR01143">
    <property type="entry name" value="murF"/>
    <property type="match status" value="1"/>
</dbReference>
<dbReference type="PANTHER" id="PTHR43024">
    <property type="entry name" value="UDP-N-ACETYLMURAMOYL-TRIPEPTIDE--D-ALANYL-D-ALANINE LIGASE"/>
    <property type="match status" value="1"/>
</dbReference>
<dbReference type="PANTHER" id="PTHR43024:SF1">
    <property type="entry name" value="UDP-N-ACETYLMURAMOYL-TRIPEPTIDE--D-ALANYL-D-ALANINE LIGASE"/>
    <property type="match status" value="1"/>
</dbReference>
<dbReference type="Pfam" id="PF01225">
    <property type="entry name" value="Mur_ligase"/>
    <property type="match status" value="1"/>
</dbReference>
<dbReference type="Pfam" id="PF02875">
    <property type="entry name" value="Mur_ligase_C"/>
    <property type="match status" value="1"/>
</dbReference>
<dbReference type="Pfam" id="PF08245">
    <property type="entry name" value="Mur_ligase_M"/>
    <property type="match status" value="1"/>
</dbReference>
<dbReference type="SUPFAM" id="SSF53623">
    <property type="entry name" value="MurD-like peptide ligases, catalytic domain"/>
    <property type="match status" value="1"/>
</dbReference>
<dbReference type="SUPFAM" id="SSF53244">
    <property type="entry name" value="MurD-like peptide ligases, peptide-binding domain"/>
    <property type="match status" value="1"/>
</dbReference>
<dbReference type="SUPFAM" id="SSF63418">
    <property type="entry name" value="MurE/MurF N-terminal domain"/>
    <property type="match status" value="1"/>
</dbReference>
<accession>O83401</accession>
<evidence type="ECO:0000255" key="1">
    <source>
        <dbReference type="HAMAP-Rule" id="MF_02019"/>
    </source>
</evidence>
<gene>
    <name evidence="1" type="primary">murF</name>
    <name type="ordered locus">TP_0386</name>
</gene>
<protein>
    <recommendedName>
        <fullName evidence="1">UDP-N-acetylmuramoyl-tripeptide--D-alanyl-D-alanine ligase</fullName>
        <ecNumber evidence="1">6.3.2.10</ecNumber>
    </recommendedName>
    <alternativeName>
        <fullName evidence="1">D-alanyl-D-alanine-adding enzyme</fullName>
    </alternativeName>
    <alternativeName>
        <fullName>UDP-MurNAc-pentapeptide synthetase</fullName>
    </alternativeName>
</protein>
<keyword id="KW-0067">ATP-binding</keyword>
<keyword id="KW-0131">Cell cycle</keyword>
<keyword id="KW-0132">Cell division</keyword>
<keyword id="KW-0133">Cell shape</keyword>
<keyword id="KW-0961">Cell wall biogenesis/degradation</keyword>
<keyword id="KW-0963">Cytoplasm</keyword>
<keyword id="KW-0436">Ligase</keyword>
<keyword id="KW-0547">Nucleotide-binding</keyword>
<keyword id="KW-0573">Peptidoglycan synthesis</keyword>
<keyword id="KW-1185">Reference proteome</keyword>
<reference key="1">
    <citation type="journal article" date="1998" name="Science">
        <title>Complete genome sequence of Treponema pallidum, the syphilis spirochete.</title>
        <authorList>
            <person name="Fraser C.M."/>
            <person name="Norris S.J."/>
            <person name="Weinstock G.M."/>
            <person name="White O."/>
            <person name="Sutton G.G."/>
            <person name="Dodson R.J."/>
            <person name="Gwinn M.L."/>
            <person name="Hickey E.K."/>
            <person name="Clayton R.A."/>
            <person name="Ketchum K.A."/>
            <person name="Sodergren E."/>
            <person name="Hardham J.M."/>
            <person name="McLeod M.P."/>
            <person name="Salzberg S.L."/>
            <person name="Peterson J.D."/>
            <person name="Khalak H.G."/>
            <person name="Richardson D.L."/>
            <person name="Howell J.K."/>
            <person name="Chidambaram M."/>
            <person name="Utterback T.R."/>
            <person name="McDonald L.A."/>
            <person name="Artiach P."/>
            <person name="Bowman C."/>
            <person name="Cotton M.D."/>
            <person name="Fujii C."/>
            <person name="Garland S.A."/>
            <person name="Hatch B."/>
            <person name="Horst K."/>
            <person name="Roberts K.M."/>
            <person name="Sandusky M."/>
            <person name="Weidman J.F."/>
            <person name="Smith H.O."/>
            <person name="Venter J.C."/>
        </authorList>
    </citation>
    <scope>NUCLEOTIDE SEQUENCE [LARGE SCALE GENOMIC DNA]</scope>
    <source>
        <strain>Nichols</strain>
    </source>
</reference>
<name>MURF_TREPA</name>
<feature type="chain" id="PRO_0000101707" description="UDP-N-acetylmuramoyl-tripeptide--D-alanyl-D-alanine ligase">
    <location>
        <begin position="1"/>
        <end position="459"/>
    </location>
</feature>
<feature type="binding site" evidence="1">
    <location>
        <begin position="121"/>
        <end position="127"/>
    </location>
    <ligand>
        <name>ATP</name>
        <dbReference type="ChEBI" id="CHEBI:30616"/>
    </ligand>
</feature>